<feature type="chain" id="PRO_0000440849" description="Hemagglutinin HA1 chain" evidence="1">
    <location>
        <begin position="1"/>
        <end position="325"/>
    </location>
</feature>
<feature type="chain" id="PRO_0000038898" description="Hemagglutinin HA2 chain" evidence="1">
    <location>
        <begin position="326"/>
        <end position="547"/>
    </location>
</feature>
<feature type="topological domain" description="Extracellular" evidence="1">
    <location>
        <begin position="1"/>
        <end position="510"/>
    </location>
</feature>
<feature type="transmembrane region" description="Helical" evidence="1">
    <location>
        <begin position="511"/>
        <end position="531"/>
    </location>
</feature>
<feature type="topological domain" description="Cytoplasmic" evidence="1">
    <location>
        <begin position="532"/>
        <end position="547"/>
    </location>
</feature>
<feature type="site" description="Cleavage; by host" evidence="1">
    <location>
        <begin position="325"/>
        <end position="326"/>
    </location>
</feature>
<feature type="lipid moiety-binding region" description="S-palmitoyl cysteine; by host" evidence="1">
    <location>
        <position position="536"/>
    </location>
</feature>
<feature type="lipid moiety-binding region" description="S-palmitoyl cysteine; by host" evidence="1">
    <location>
        <position position="543"/>
    </location>
</feature>
<feature type="lipid moiety-binding region" description="S-palmitoyl cysteine; by host" evidence="1">
    <location>
        <position position="546"/>
    </location>
</feature>
<feature type="glycosylation site" description="N-linked (GlcNAc...) asparagine; by host" evidence="1">
    <location>
        <position position="10"/>
    </location>
</feature>
<feature type="glycosylation site" description="N-linked (GlcNAc...) asparagine; by host" evidence="1">
    <location>
        <position position="23"/>
    </location>
</feature>
<feature type="glycosylation site" description="N-linked (GlcNAc...) asparagine; by host" evidence="1">
    <location>
        <position position="165"/>
    </location>
</feature>
<feature type="glycosylation site" description="N-linked (GlcNAc...) asparagine; by host" evidence="1">
    <location>
        <position position="235"/>
    </location>
</feature>
<feature type="glycosylation site" description="N-linked (GlcNAc...) asparagine; by host" evidence="1">
    <location>
        <position position="285"/>
    </location>
</feature>
<feature type="glycosylation site" description="N-linked (GlcNAc...) asparagine; by host" evidence="1">
    <location>
        <position position="479"/>
    </location>
</feature>
<feature type="disulfide bond" description="Interchain (between HA1 and HA2 chains)" evidence="1">
    <location>
        <begin position="4"/>
        <end position="462"/>
    </location>
</feature>
<feature type="disulfide bond" evidence="1">
    <location>
        <begin position="42"/>
        <end position="273"/>
    </location>
</feature>
<feature type="disulfide bond" evidence="1">
    <location>
        <begin position="55"/>
        <end position="67"/>
    </location>
</feature>
<feature type="disulfide bond" evidence="1">
    <location>
        <begin position="90"/>
        <end position="135"/>
    </location>
</feature>
<feature type="disulfide bond" evidence="1">
    <location>
        <begin position="277"/>
        <end position="301"/>
    </location>
</feature>
<feature type="disulfide bond" evidence="1">
    <location>
        <begin position="469"/>
        <end position="473"/>
    </location>
</feature>
<feature type="non-terminal residue">
    <location>
        <position position="1"/>
    </location>
</feature>
<evidence type="ECO:0000255" key="1">
    <source>
        <dbReference type="HAMAP-Rule" id="MF_04072"/>
    </source>
</evidence>
<gene>
    <name evidence="1" type="primary">HA</name>
</gene>
<sequence>DQICIGYHANNSKKQIDTIMEKNVTVTHAQDILEKKHNGKLCSLKGVKPLILKDCSVAGLVLGNPMCDDFLNAPEWSYIVEKNNPINGLCYPGDFNDYEELKHLVSSTNLFEKIRIIPRNSWTNHDASSGVSSACPHLGRSSFFRNVVWLIKKNNVYPTIKRTYNNTNVEDLLILWGIHHPNDAAEQAKLYQNLNAYVSVTSTLNQRSIPKIATRPKVNGQSGRMEFFWTILRPNDTISFESTGNFIAPEYAYKIVKKGDSAIMRSELEYGNCDTKCQTPLVAINSSMPFHNVHPLTIGECPKYVKSDKLVLATGMRNVPQKKKRGLFGAIAGFIEGGWQGMVDGWYGYHHINGQGSGYAADKKSTQKAIDGITNKVNSIIDKMNTQFEAVGREFNNLERRIENLNKNLEDGFIDVWTYNAELLVLMENERTLDLHDSNVKNLYDKVRLQLRDNAKEWGNGCFEFYHKCDNECMESVRNGTYNYPKYSEESKLKRKEIDGIKWESMGTYQILSIYSTVASSLALAIMVAGLSFWMCSNGSLQCRICI</sequence>
<organismHost>
    <name type="scientific">Aves</name>
    <dbReference type="NCBI Taxonomy" id="8782"/>
</organismHost>
<accession>P07977</accession>
<accession>Q84023</accession>
<accession>Q84024</accession>
<organism>
    <name type="scientific">Influenza A virus (strain A/Chicken/Pennsylvania/1370/1983 H5N2)</name>
    <dbReference type="NCBI Taxonomy" id="385617"/>
    <lineage>
        <taxon>Viruses</taxon>
        <taxon>Riboviria</taxon>
        <taxon>Orthornavirae</taxon>
        <taxon>Negarnaviricota</taxon>
        <taxon>Polyploviricotina</taxon>
        <taxon>Insthoviricetes</taxon>
        <taxon>Articulavirales</taxon>
        <taxon>Orthomyxoviridae</taxon>
        <taxon>Alphainfluenzavirus</taxon>
        <taxon>Alphainfluenzavirus influenzae</taxon>
        <taxon>Influenza A virus</taxon>
    </lineage>
</organism>
<comment type="function">
    <text evidence="1">Binds to sialic acid-containing receptors on the cell surface, bringing about the attachment of the virus particle to the cell. This attachment induces virion internalization either through clathrin-dependent endocytosis or through clathrin- and caveolin-independent pathway. Plays a major role in the determination of host range restriction and virulence. Class I viral fusion protein. Responsible for penetration of the virus into the cell cytoplasm by mediating the fusion of the membrane of the endocytosed virus particle with the endosomal membrane. Low pH in endosomes induces an irreversible conformational change in HA2, releasing the fusion hydrophobic peptide. Several trimers are required to form a competent fusion pore.</text>
</comment>
<comment type="subunit">
    <text evidence="1">Homotrimer of disulfide-linked HA1-HA2.</text>
</comment>
<comment type="subcellular location">
    <subcellularLocation>
        <location evidence="1">Virion membrane</location>
        <topology evidence="1">Single-pass type I membrane protein</topology>
    </subcellularLocation>
    <subcellularLocation>
        <location evidence="1">Host apical cell membrane</location>
        <topology evidence="1">Single-pass type I membrane protein</topology>
    </subcellularLocation>
    <text evidence="1">Targeted to the apical plasma membrane in epithelial polarized cells through a signal present in the transmembrane domain. Associated with glycosphingolipid- and cholesterol-enriched detergent-resistant lipid rafts.</text>
</comment>
<comment type="PTM">
    <text evidence="1">Palmitoylated.</text>
</comment>
<comment type="PTM">
    <text evidence="1">In natural infection, inactive HA is matured into HA1 and HA2 outside the cell by one or more trypsin-like, arginine-specific endoprotease secreted by the bronchial epithelial cells. One identified protease that may be involved in this process is secreted in lungs by club cells.</text>
</comment>
<comment type="miscellaneous">
    <text>Major glycoprotein, comprises over 80% of the envelope proteins present in virus particle.</text>
</comment>
<comment type="miscellaneous">
    <text>The extent of infection into host organism is determined by HA. Influenza viruses bud from the apical surface of polarized epithelial cells (e.g. bronchial epithelial cells) into lumen of lungs and are therefore usually pneumotropic. The reason is that HA is cleaved by tryptase clara which is restricted to lungs. However, HAs of H5 and H7 pantropic avian viruses subtypes can be cleaved by furin and subtilisin-type enzymes, allowing the virus to grow in other organs than lungs.</text>
</comment>
<comment type="miscellaneous">
    <text>The influenza A genome consist of 8 RNA segments. Genetic variation of hemagglutinin and/or neuraminidase genes results in the emergence of new influenza strains. The mechanism of variation can be the result of point mutations or the result of genetic reassortment between segments of two different strains.</text>
</comment>
<comment type="similarity">
    <text evidence="1">Belongs to the influenza viruses hemagglutinin family.</text>
</comment>
<dbReference type="EMBL" id="M10243">
    <property type="protein sequence ID" value="AAA43159.1"/>
    <property type="molecule type" value="Genomic_RNA"/>
</dbReference>
<dbReference type="SMR" id="P07977"/>
<dbReference type="GlyCosmos" id="P07977">
    <property type="glycosylation" value="6 sites, No reported glycans"/>
</dbReference>
<dbReference type="Proteomes" id="UP000105783">
    <property type="component" value="Genome"/>
</dbReference>
<dbReference type="GO" id="GO:0020002">
    <property type="term" value="C:host cell plasma membrane"/>
    <property type="evidence" value="ECO:0007669"/>
    <property type="project" value="UniProtKB-SubCell"/>
</dbReference>
<dbReference type="GO" id="GO:0016020">
    <property type="term" value="C:membrane"/>
    <property type="evidence" value="ECO:0007669"/>
    <property type="project" value="UniProtKB-KW"/>
</dbReference>
<dbReference type="GO" id="GO:0019031">
    <property type="term" value="C:viral envelope"/>
    <property type="evidence" value="ECO:0007669"/>
    <property type="project" value="UniProtKB-KW"/>
</dbReference>
<dbReference type="GO" id="GO:0055036">
    <property type="term" value="C:virion membrane"/>
    <property type="evidence" value="ECO:0007669"/>
    <property type="project" value="UniProtKB-SubCell"/>
</dbReference>
<dbReference type="GO" id="GO:0046789">
    <property type="term" value="F:host cell surface receptor binding"/>
    <property type="evidence" value="ECO:0007669"/>
    <property type="project" value="InterPro"/>
</dbReference>
<dbReference type="GO" id="GO:0075512">
    <property type="term" value="P:clathrin-dependent endocytosis of virus by host cell"/>
    <property type="evidence" value="ECO:0007669"/>
    <property type="project" value="UniProtKB-KW"/>
</dbReference>
<dbReference type="GO" id="GO:0039654">
    <property type="term" value="P:fusion of virus membrane with host endosome membrane"/>
    <property type="evidence" value="ECO:0007669"/>
    <property type="project" value="UniProtKB-KW"/>
</dbReference>
<dbReference type="GO" id="GO:0019064">
    <property type="term" value="P:fusion of virus membrane with host plasma membrane"/>
    <property type="evidence" value="ECO:0007669"/>
    <property type="project" value="InterPro"/>
</dbReference>
<dbReference type="GO" id="GO:0019062">
    <property type="term" value="P:virion attachment to host cell"/>
    <property type="evidence" value="ECO:0007669"/>
    <property type="project" value="UniProtKB-KW"/>
</dbReference>
<dbReference type="Gene3D" id="3.90.20.10">
    <property type="match status" value="1"/>
</dbReference>
<dbReference type="Gene3D" id="3.90.209.20">
    <property type="match status" value="1"/>
</dbReference>
<dbReference type="HAMAP" id="MF_04072">
    <property type="entry name" value="INFV_HEMA"/>
    <property type="match status" value="1"/>
</dbReference>
<dbReference type="InterPro" id="IPR008980">
    <property type="entry name" value="Capsid_hemagglutn"/>
</dbReference>
<dbReference type="InterPro" id="IPR013828">
    <property type="entry name" value="Hemagglutn_HA1_a/b_dom_sf"/>
</dbReference>
<dbReference type="InterPro" id="IPR000149">
    <property type="entry name" value="Hemagglutn_influenz_A"/>
</dbReference>
<dbReference type="InterPro" id="IPR001364">
    <property type="entry name" value="Hemagglutn_influenz_A/B"/>
</dbReference>
<dbReference type="Pfam" id="PF00509">
    <property type="entry name" value="Hemagglutinin"/>
    <property type="match status" value="1"/>
</dbReference>
<dbReference type="PRINTS" id="PR00330">
    <property type="entry name" value="HEMAGGLUTN1"/>
</dbReference>
<dbReference type="PRINTS" id="PR00329">
    <property type="entry name" value="HEMAGGLUTN12"/>
</dbReference>
<dbReference type="SUPFAM" id="SSF58064">
    <property type="entry name" value="Influenza hemagglutinin (stalk)"/>
    <property type="match status" value="1"/>
</dbReference>
<dbReference type="SUPFAM" id="SSF49818">
    <property type="entry name" value="Viral protein domain"/>
    <property type="match status" value="1"/>
</dbReference>
<keyword id="KW-1167">Clathrin- and caveolin-independent endocytosis of virus by host</keyword>
<keyword id="KW-1165">Clathrin-mediated endocytosis of virus by host</keyword>
<keyword id="KW-1015">Disulfide bond</keyword>
<keyword id="KW-1170">Fusion of virus membrane with host endosomal membrane</keyword>
<keyword id="KW-1168">Fusion of virus membrane with host membrane</keyword>
<keyword id="KW-0325">Glycoprotein</keyword>
<keyword id="KW-0348">Hemagglutinin</keyword>
<keyword id="KW-1032">Host cell membrane</keyword>
<keyword id="KW-1043">Host membrane</keyword>
<keyword id="KW-0945">Host-virus interaction</keyword>
<keyword id="KW-0449">Lipoprotein</keyword>
<keyword id="KW-0472">Membrane</keyword>
<keyword id="KW-0564">Palmitate</keyword>
<keyword id="KW-0812">Transmembrane</keyword>
<keyword id="KW-1133">Transmembrane helix</keyword>
<keyword id="KW-1161">Viral attachment to host cell</keyword>
<keyword id="KW-0261">Viral envelope protein</keyword>
<keyword id="KW-1162">Viral penetration into host cytoplasm</keyword>
<keyword id="KW-0946">Virion</keyword>
<keyword id="KW-1164">Virus endocytosis by host</keyword>
<keyword id="KW-1160">Virus entry into host cell</keyword>
<name>HEMA_I83A6</name>
<protein>
    <recommendedName>
        <fullName evidence="1">Hemagglutinin</fullName>
    </recommendedName>
    <component>
        <recommendedName>
            <fullName evidence="1">Hemagglutinin HA1 chain</fullName>
        </recommendedName>
    </component>
    <component>
        <recommendedName>
            <fullName evidence="1">Hemagglutinin HA2 chain</fullName>
        </recommendedName>
    </component>
</protein>
<reference key="1">
    <citation type="journal article" date="1984" name="Virology">
        <title>Is virulence of H5N2 influenza viruses in chickens associated with loss of carbohydrate from the hemagglutinin?</title>
        <authorList>
            <person name="Kawaoka Y."/>
            <person name="Naeve C.W."/>
            <person name="Webster R.G."/>
        </authorList>
    </citation>
    <scope>NUCLEOTIDE SEQUENCE [GENOMIC RNA]</scope>
</reference>
<proteinExistence type="inferred from homology"/>